<sequence>YGRRRHPKKLTPLAYKQFIPNVAEKTLGASGRYEGKITRNSERFKELTPNYNPDIIFKDEENTVMNQWPGVKLRMTEGWDEDGHHFEESLHYEGRAVDITTSDRDKSKYGTLSRLAVENGF</sequence>
<feature type="chain" id="PRO_0000058733" description="Sonic hedgehog protein">
    <location>
        <begin position="1" status="less than"/>
        <end position="121" status="greater than"/>
    </location>
</feature>
<feature type="binding site" evidence="2">
    <location>
        <position position="60"/>
    </location>
    <ligand>
        <name>Ca(2+)</name>
        <dbReference type="ChEBI" id="CHEBI:29108"/>
        <label>1</label>
    </ligand>
</feature>
<feature type="binding site" evidence="2">
    <location>
        <position position="61"/>
    </location>
    <ligand>
        <name>Ca(2+)</name>
        <dbReference type="ChEBI" id="CHEBI:29108"/>
        <label>1</label>
    </ligand>
</feature>
<feature type="binding site" evidence="2">
    <location>
        <position position="61"/>
    </location>
    <ligand>
        <name>Ca(2+)</name>
        <dbReference type="ChEBI" id="CHEBI:29108"/>
        <label>2</label>
    </ligand>
</feature>
<feature type="binding site" evidence="2">
    <location>
        <position position="76"/>
    </location>
    <ligand>
        <name>Ca(2+)</name>
        <dbReference type="ChEBI" id="CHEBI:29108"/>
        <label>1</label>
    </ligand>
</feature>
<feature type="binding site" evidence="2">
    <location>
        <position position="77"/>
    </location>
    <ligand>
        <name>Ca(2+)</name>
        <dbReference type="ChEBI" id="CHEBI:29108"/>
        <label>1</label>
    </ligand>
</feature>
<feature type="binding site" evidence="2">
    <location>
        <position position="77"/>
    </location>
    <ligand>
        <name>Ca(2+)</name>
        <dbReference type="ChEBI" id="CHEBI:29108"/>
        <label>2</label>
    </ligand>
</feature>
<feature type="binding site" evidence="2">
    <location>
        <position position="80"/>
    </location>
    <ligand>
        <name>Ca(2+)</name>
        <dbReference type="ChEBI" id="CHEBI:29108"/>
        <label>2</label>
    </ligand>
</feature>
<feature type="binding site" evidence="2">
    <location>
        <position position="82"/>
    </location>
    <ligand>
        <name>Ca(2+)</name>
        <dbReference type="ChEBI" id="CHEBI:29108"/>
        <label>2</label>
    </ligand>
</feature>
<feature type="binding site" evidence="2">
    <location>
        <position position="91"/>
    </location>
    <ligand>
        <name>Zn(2+)</name>
        <dbReference type="ChEBI" id="CHEBI:29105"/>
    </ligand>
</feature>
<feature type="binding site" evidence="2">
    <location>
        <position position="98"/>
    </location>
    <ligand>
        <name>Zn(2+)</name>
        <dbReference type="ChEBI" id="CHEBI:29105"/>
    </ligand>
</feature>
<feature type="non-consecutive residues" evidence="3">
    <location>
        <begin position="63"/>
        <end position="64"/>
    </location>
</feature>
<feature type="non-terminal residue">
    <location>
        <position position="1"/>
    </location>
</feature>
<feature type="non-terminal residue">
    <location>
        <position position="121"/>
    </location>
</feature>
<name>SHH_PETCC</name>
<gene>
    <name type="primary">shh</name>
</gene>
<reference key="1">
    <citation type="journal article" date="1996" name="Proc. Natl. Acad. Sci. U.S.A.">
        <title>Evolutionary analyses of hedgehog and Hoxd-10 genes in fish species closely related to the zebrafish.</title>
        <authorList>
            <person name="Zardoya R."/>
            <person name="Abouheif E."/>
            <person name="Meyer A."/>
        </authorList>
    </citation>
    <scope>NUCLEOTIDE SEQUENCE [GENOMIC DNA]</scope>
    <source>
        <tissue>Muscle</tissue>
    </source>
</reference>
<comment type="function">
    <text evidence="1">Intercellular signal essential for a variety of patterning events during development. Signal produced by the notochord that induces somite patterning, dorso-ventral patterning of the brain and early patterning of the developing eyes. Displays floor plate-inducing activity. Binds to the patched (PTC) receptor, which functions in association with smoothened (SMO), to activate the transcription of target genes. In the absence of SHH, PTC represses the constitutive signaling activity of SMO (By similarity).</text>
</comment>
<comment type="subunit">
    <text evidence="1">N-product is active as a multimer.</text>
</comment>
<comment type="subcellular location">
    <subcellularLocation>
        <location evidence="1">Secreted</location>
    </subcellularLocation>
    <subcellularLocation>
        <location evidence="1">Cell membrane</location>
    </subcellularLocation>
    <text evidence="1">Sonic hedgehog protein C-product: Secreted, extracellular space. Sonic hedgehog protein N-product: Cell membrane; Lipid-anchor. The C-terminal peptide diffuses from the cell, while the N-product either remains associated with lipid rafts at the cell surface, or forms freely diffusible active multimers with its hydrophobic lipid-modified N- and C-termini buried inside.</text>
</comment>
<comment type="domain">
    <text evidence="1">The sonic hedgehog protein N-product binds calcium and zinc ions; this stabilizes the protein fold and is essential for protein-protein interactions mediated by this domain.</text>
</comment>
<comment type="PTM">
    <text>The C-terminal domain displays an autoproteolysis activity and a cholesterol transferase activity. Both activities result in the cleavage of the full-length protein and covalent attachment of a cholesterol moiety to the C-terminal of the newly generated N-terminal fragment (N-product). The N-product is the active species in both local and long-range signaling, whereas the C-product has no signaling activity.</text>
</comment>
<comment type="PTM">
    <text evidence="1">Cholesterylation is required for N-product targeting to lipid rafts and multimerization.</text>
</comment>
<comment type="PTM">
    <text evidence="1">N-palmitoylation is required for N-product multimerization and full activity.</text>
</comment>
<comment type="similarity">
    <text evidence="3">Belongs to the hedgehog family.</text>
</comment>
<dbReference type="EMBL" id="U51353">
    <property type="protein sequence ID" value="AAB38576.1"/>
    <property type="molecule type" value="Genomic_DNA"/>
</dbReference>
<dbReference type="EMBL" id="U51373">
    <property type="protein sequence ID" value="AAB38595.1"/>
    <property type="molecule type" value="Genomic_DNA"/>
</dbReference>
<dbReference type="SMR" id="P79838"/>
<dbReference type="GO" id="GO:0005615">
    <property type="term" value="C:extracellular space"/>
    <property type="evidence" value="ECO:0007669"/>
    <property type="project" value="TreeGrafter"/>
</dbReference>
<dbReference type="GO" id="GO:0005886">
    <property type="term" value="C:plasma membrane"/>
    <property type="evidence" value="ECO:0007669"/>
    <property type="project" value="UniProtKB-SubCell"/>
</dbReference>
<dbReference type="GO" id="GO:0005509">
    <property type="term" value="F:calcium ion binding"/>
    <property type="evidence" value="ECO:0007669"/>
    <property type="project" value="TreeGrafter"/>
</dbReference>
<dbReference type="GO" id="GO:0005113">
    <property type="term" value="F:patched binding"/>
    <property type="evidence" value="ECO:0007669"/>
    <property type="project" value="TreeGrafter"/>
</dbReference>
<dbReference type="GO" id="GO:0008233">
    <property type="term" value="F:peptidase activity"/>
    <property type="evidence" value="ECO:0007669"/>
    <property type="project" value="UniProtKB-KW"/>
</dbReference>
<dbReference type="GO" id="GO:0048513">
    <property type="term" value="P:animal organ development"/>
    <property type="evidence" value="ECO:0007669"/>
    <property type="project" value="UniProtKB-ARBA"/>
</dbReference>
<dbReference type="GO" id="GO:0048468">
    <property type="term" value="P:cell development"/>
    <property type="evidence" value="ECO:0007669"/>
    <property type="project" value="UniProtKB-ARBA"/>
</dbReference>
<dbReference type="GO" id="GO:0001708">
    <property type="term" value="P:cell fate specification"/>
    <property type="evidence" value="ECO:0007669"/>
    <property type="project" value="TreeGrafter"/>
</dbReference>
<dbReference type="GO" id="GO:0007267">
    <property type="term" value="P:cell-cell signaling"/>
    <property type="evidence" value="ECO:0007669"/>
    <property type="project" value="InterPro"/>
</dbReference>
<dbReference type="GO" id="GO:0007417">
    <property type="term" value="P:central nervous system development"/>
    <property type="evidence" value="ECO:0007669"/>
    <property type="project" value="UniProtKB-ARBA"/>
</dbReference>
<dbReference type="GO" id="GO:0030182">
    <property type="term" value="P:neuron differentiation"/>
    <property type="evidence" value="ECO:0007669"/>
    <property type="project" value="UniProtKB-ARBA"/>
</dbReference>
<dbReference type="GO" id="GO:0006508">
    <property type="term" value="P:proteolysis"/>
    <property type="evidence" value="ECO:0007669"/>
    <property type="project" value="UniProtKB-KW"/>
</dbReference>
<dbReference type="GO" id="GO:0010468">
    <property type="term" value="P:regulation of gene expression"/>
    <property type="evidence" value="ECO:0007669"/>
    <property type="project" value="TreeGrafter"/>
</dbReference>
<dbReference type="GO" id="GO:0007224">
    <property type="term" value="P:smoothened signaling pathway"/>
    <property type="evidence" value="ECO:0007669"/>
    <property type="project" value="TreeGrafter"/>
</dbReference>
<dbReference type="GO" id="GO:0009888">
    <property type="term" value="P:tissue development"/>
    <property type="evidence" value="ECO:0007669"/>
    <property type="project" value="UniProtKB-ARBA"/>
</dbReference>
<dbReference type="Gene3D" id="3.30.1380.10">
    <property type="match status" value="1"/>
</dbReference>
<dbReference type="InterPro" id="IPR001657">
    <property type="entry name" value="Hedgehog"/>
</dbReference>
<dbReference type="InterPro" id="IPR009045">
    <property type="entry name" value="Hedgehog_sig/DD-Pept_Zn-bd_sf"/>
</dbReference>
<dbReference type="InterPro" id="IPR050387">
    <property type="entry name" value="Hedgehog_Signaling"/>
</dbReference>
<dbReference type="InterPro" id="IPR000320">
    <property type="entry name" value="Hedgehog_signalling_dom"/>
</dbReference>
<dbReference type="PANTHER" id="PTHR11889">
    <property type="entry name" value="HEDGEHOG"/>
    <property type="match status" value="1"/>
</dbReference>
<dbReference type="PANTHER" id="PTHR11889:SF36">
    <property type="entry name" value="SONIC HEDGEHOG PROTEIN"/>
    <property type="match status" value="1"/>
</dbReference>
<dbReference type="Pfam" id="PF01085">
    <property type="entry name" value="HH_signal"/>
    <property type="match status" value="1"/>
</dbReference>
<dbReference type="PRINTS" id="PR00632">
    <property type="entry name" value="SONICHHOG"/>
</dbReference>
<dbReference type="SUPFAM" id="SSF55166">
    <property type="entry name" value="Hedgehog/DD-peptidase"/>
    <property type="match status" value="1"/>
</dbReference>
<proteinExistence type="inferred from homology"/>
<keyword id="KW-0068">Autocatalytic cleavage</keyword>
<keyword id="KW-0106">Calcium</keyword>
<keyword id="KW-1003">Cell membrane</keyword>
<keyword id="KW-0217">Developmental protein</keyword>
<keyword id="KW-0378">Hydrolase</keyword>
<keyword id="KW-0449">Lipoprotein</keyword>
<keyword id="KW-0472">Membrane</keyword>
<keyword id="KW-0479">Metal-binding</keyword>
<keyword id="KW-0564">Palmitate</keyword>
<keyword id="KW-0645">Protease</keyword>
<keyword id="KW-0964">Secreted</keyword>
<keyword id="KW-0862">Zinc</keyword>
<evidence type="ECO:0000250" key="1"/>
<evidence type="ECO:0000250" key="2">
    <source>
        <dbReference type="UniProtKB" id="Q15465"/>
    </source>
</evidence>
<evidence type="ECO:0000305" key="3"/>
<organism>
    <name type="scientific">Pethia conchonius</name>
    <name type="common">Rosy barb</name>
    <name type="synonym">Puntius conchonius</name>
    <dbReference type="NCBI Taxonomy" id="27708"/>
    <lineage>
        <taxon>Eukaryota</taxon>
        <taxon>Metazoa</taxon>
        <taxon>Chordata</taxon>
        <taxon>Craniata</taxon>
        <taxon>Vertebrata</taxon>
        <taxon>Euteleostomi</taxon>
        <taxon>Actinopterygii</taxon>
        <taxon>Neopterygii</taxon>
        <taxon>Teleostei</taxon>
        <taxon>Ostariophysi</taxon>
        <taxon>Cypriniformes</taxon>
        <taxon>Cyprinidae</taxon>
        <taxon>Smiliogastrinae</taxon>
        <taxon>Pethia</taxon>
    </lineage>
</organism>
<accession>P79838</accession>
<accession>P79840</accession>
<protein>
    <recommendedName>
        <fullName>Sonic hedgehog protein</fullName>
        <shortName>SHH</shortName>
    </recommendedName>
</protein>